<keyword id="KW-0002">3D-structure</keyword>
<keyword id="KW-0106">Calcium</keyword>
<keyword id="KW-0134">Cell wall</keyword>
<keyword id="KW-0326">Glycosidase</keyword>
<keyword id="KW-0378">Hydrolase</keyword>
<keyword id="KW-0479">Metal-binding</keyword>
<keyword id="KW-0572">Peptidoglycan-anchor</keyword>
<keyword id="KW-1185">Reference proteome</keyword>
<keyword id="KW-0964">Secreted</keyword>
<keyword id="KW-0732">Signal</keyword>
<keyword id="KW-0843">Virulence</keyword>
<sequence>MNKGLFEKRCKYSIRKFSLGVASVMIGATFFGTSPVLADSVQSGSTANLPADLATALATAKENDGHDFEAPKVGEDQGSPEVTDGPKTEEELLALEKEKPAEEKPKEDKPAAAKPETPKTVTPEWQTVEKKEQQGTVTIREEKGVRYNQLSSTAQNDNAGKPALFEKKGLTVDANGNATVDLTFKDDSEKGKSRFGVFLKFKDTKNNVFVGYDKDGWFWEYKSPTTSTWYRGSRVAAPETGSTNRLSITLKSDGQLNASNNDVNLFDTVTLPAAVNDHLKNEKKILLKAGSYDDERTVVSVKTDNQEGVKTEDTPAEKETGPEVDDSKVTYDTIQSKVLKAVIDQAFPRVKEYSLNGHTLPGQVQQFNQVFINNHRITPEVTYKKINETTAEYLMKLRDDAHLINAEMTVRLQVVDNQLHFDVTKIVNHNQVTPGQKIDDERKLLSSISFLGNALVSVSSDQTGAKFDGATMSNNTHVSGDDHIDVTNPMKDLAKGYMYGFVSTDKLAAGVWSNSQNSYGGGSNDWTRLTAYKETVGNANYVGIHSSEWQWEKAYKGIVFPEYTKELPSAKVVITEDANADKKVDWQDGAIAYRSIMNNPQGWKKVKDITAYRIAMNFGSQAQNPFLMTLDGIKKINLHTDGLGQGVLLKGYGSEGHDSGHLNYADIGKRIGGVEDFKTLIEKAKKYGAHLGIHVNASETYPESKYFNEKILRKNPDGSYSYGWNWLDQGINIDAAYDLAHGRLARWEDLKKKLGDGLDFIYVDVWGNGQSGDNGAWATHVLAKEINKQGWRFAIEWGHGGEYDSTFHHWAADLTYGGYTNKGINSAITRFIRNHQKDAWVGDYRSYGGAANYPLLGGYSMKDFEGWQGRSDYNGYVTNLFAHDVMTKYFQHFTVSKWENGTPVTMTDNGSTYKWTPEMRVELVDADNNKVVVTRKSNDVNSPQYRERTVTLNGRVIQDGSAYLTPWNWDANGKKLSTDKEKMYYFNTQAGATTWTLPSDWAKSKVYLYKLTDQGKTEEQELTVKDGKITLDLLANQPYVLYRSKQTNPEMSWSEGMHIYDQGFNSGTLKHWTISGDASKAEIVKSQGANDMLRIQGNKEKVSLTQKLTGLKPNTKYAVYVGVDNRSNAKASITVNTGEKEVTTYTNKSLALNYVKAYAHNTRRNNATVDDTSYFQNMYAFFTTGSDVSNVTLTLSREAGDEATYFDEIRTFENNSSMYGDKHDTGKGTFKQDFENVAQGIFPFVVGGVEGVEDNRTHLSEKHDPYTQRGWNGKKVDDVIEGNWSLKTNGLVSRRNLVYQTIPQNFRFEAGKTYRVTFEYEAGSDNTYAFVVGKGEFQSGRRGTQASNLEMHELPNTWTDSKKAKKATFLVTGAETGDTWVGIYSTGNASNTRGDSGGNANFRGYNDFMMDNLQIEEITLTGKMLTENALKNYLPTVAMTNYTKESMDALKEAVFNLSQADDDISVEEARAEIAKIEALKNALVQKKTALVADDFASLTAPAQAQEGLANAFDGNLSSLWHTSWGGGDVGKPATMVLKEATEITGLRYVPRGSGSNGNLRDVKLVVTDESGKEHTFTATDWPDNNKPKDIDFGKTIKAKKIVLTGTKTYGDGGDKYQSAAELIFTRPQVAETPLDLSGYEAALAKAQKLTDKDNQEEVASVQASMKYATDNHLLTERMVEYFADYLNQLKDSATKPDAPTVEKPEFKLSSVASDQGKTPDYKQEIARPETPEQILPATGESQFDTALFLASVSLALSALFVVKTKKD</sequence>
<accession>Q8DR60</accession>
<feature type="signal peptide" evidence="1">
    <location>
        <begin position="1"/>
        <end position="39"/>
    </location>
</feature>
<feature type="chain" id="PRO_0000408870" description="Endo-alpha-N-acetylgalactosaminidase">
    <location>
        <begin position="40"/>
        <end position="1738"/>
    </location>
</feature>
<feature type="propeptide" id="PRO_0000408871" description="Removed by sortase" evidence="2">
    <location>
        <begin position="1739"/>
        <end position="1767"/>
    </location>
</feature>
<feature type="region of interest" description="Disordered" evidence="3">
    <location>
        <begin position="63"/>
        <end position="137"/>
    </location>
</feature>
<feature type="region of interest" description="Disordered" evidence="3">
    <location>
        <begin position="301"/>
        <end position="324"/>
    </location>
</feature>
<feature type="region of interest" description="Catalytic">
    <location>
        <begin position="602"/>
        <end position="893"/>
    </location>
</feature>
<feature type="short sequence motif" description="LPXTG sorting signal" evidence="2">
    <location>
        <begin position="1735"/>
        <end position="1739"/>
    </location>
</feature>
<feature type="compositionally biased region" description="Basic and acidic residues" evidence="3">
    <location>
        <begin position="63"/>
        <end position="75"/>
    </location>
</feature>
<feature type="compositionally biased region" description="Basic and acidic residues" evidence="3">
    <location>
        <begin position="84"/>
        <end position="111"/>
    </location>
</feature>
<feature type="compositionally biased region" description="Low complexity" evidence="3">
    <location>
        <begin position="112"/>
        <end position="124"/>
    </location>
</feature>
<feature type="compositionally biased region" description="Basic and acidic residues" evidence="3">
    <location>
        <begin position="127"/>
        <end position="137"/>
    </location>
</feature>
<feature type="compositionally biased region" description="Basic and acidic residues" evidence="3">
    <location>
        <begin position="304"/>
        <end position="324"/>
    </location>
</feature>
<feature type="active site" description="Nucleophile" evidence="5">
    <location>
        <position position="764"/>
    </location>
</feature>
<feature type="active site" description="Proton donor/acceptor" evidence="5">
    <location>
        <position position="796"/>
    </location>
</feature>
<feature type="binding site" evidence="4">
    <location>
        <position position="577"/>
    </location>
    <ligand>
        <name>Ca(2+)</name>
        <dbReference type="ChEBI" id="CHEBI:29108"/>
        <label>1</label>
    </ligand>
</feature>
<feature type="binding site" evidence="4">
    <location>
        <position position="579"/>
    </location>
    <ligand>
        <name>Ca(2+)</name>
        <dbReference type="ChEBI" id="CHEBI:29108"/>
        <label>1</label>
    </ligand>
</feature>
<feature type="binding site" evidence="4">
    <location>
        <position position="581"/>
    </location>
    <ligand>
        <name>Ca(2+)</name>
        <dbReference type="ChEBI" id="CHEBI:29108"/>
        <label>1</label>
    </ligand>
</feature>
<feature type="binding site" evidence="4">
    <location>
        <position position="583"/>
    </location>
    <ligand>
        <name>Ca(2+)</name>
        <dbReference type="ChEBI" id="CHEBI:29108"/>
        <label>1</label>
    </ligand>
</feature>
<feature type="binding site" evidence="4">
    <location>
        <position position="588"/>
    </location>
    <ligand>
        <name>Ca(2+)</name>
        <dbReference type="ChEBI" id="CHEBI:29108"/>
        <label>1</label>
    </ligand>
</feature>
<feature type="binding site" evidence="7">
    <location>
        <position position="658"/>
    </location>
    <ligand>
        <name>substrate</name>
    </ligand>
</feature>
<feature type="binding site" evidence="4">
    <location>
        <position position="1233"/>
    </location>
    <ligand>
        <name>Ca(2+)</name>
        <dbReference type="ChEBI" id="CHEBI:29108"/>
        <label>2</label>
    </ligand>
</feature>
<feature type="binding site" evidence="4">
    <location>
        <position position="1235"/>
    </location>
    <ligand>
        <name>Ca(2+)</name>
        <dbReference type="ChEBI" id="CHEBI:29108"/>
        <label>2</label>
    </ligand>
</feature>
<feature type="binding site" evidence="4">
    <location>
        <position position="1281"/>
    </location>
    <ligand>
        <name>Ca(2+)</name>
        <dbReference type="ChEBI" id="CHEBI:29108"/>
        <label>2</label>
    </ligand>
</feature>
<feature type="binding site" evidence="4">
    <location>
        <position position="1284"/>
    </location>
    <ligand>
        <name>Ca(2+)</name>
        <dbReference type="ChEBI" id="CHEBI:29108"/>
        <label>2</label>
    </ligand>
</feature>
<feature type="binding site" evidence="4">
    <location>
        <position position="1411"/>
    </location>
    <ligand>
        <name>Ca(2+)</name>
        <dbReference type="ChEBI" id="CHEBI:29108"/>
        <label>2</label>
    </ligand>
</feature>
<feature type="modified residue" description="Pentaglycyl murein peptidoglycan amidated threonine" evidence="2">
    <location>
        <position position="1738"/>
    </location>
</feature>
<feature type="mutagenesis site" description="Large decrease in substrate affinity." evidence="5">
    <original>D</original>
    <variation>A</variation>
    <location>
        <position position="658"/>
    </location>
</feature>
<feature type="mutagenesis site" description="Loss of activity." evidence="5">
    <original>D</original>
    <variation>A</variation>
    <location>
        <position position="764"/>
    </location>
</feature>
<feature type="mutagenesis site" description="Loss of activity." evidence="5">
    <original>E</original>
    <variation>A</variation>
    <variation>Q</variation>
    <location>
        <position position="796"/>
    </location>
</feature>
<feature type="strand" evidence="8">
    <location>
        <begin position="124"/>
        <end position="127"/>
    </location>
</feature>
<feature type="helix" evidence="8">
    <location>
        <begin position="131"/>
        <end position="133"/>
    </location>
</feature>
<feature type="strand" evidence="8">
    <location>
        <begin position="136"/>
        <end position="142"/>
    </location>
</feature>
<feature type="strand" evidence="8">
    <location>
        <begin position="145"/>
        <end position="151"/>
    </location>
</feature>
<feature type="strand" evidence="8">
    <location>
        <begin position="158"/>
        <end position="161"/>
    </location>
</feature>
<feature type="strand" evidence="8">
    <location>
        <begin position="163"/>
        <end position="167"/>
    </location>
</feature>
<feature type="strand" evidence="8">
    <location>
        <begin position="178"/>
        <end position="186"/>
    </location>
</feature>
<feature type="strand" evidence="8">
    <location>
        <begin position="195"/>
        <end position="203"/>
    </location>
</feature>
<feature type="strand" evidence="8">
    <location>
        <begin position="206"/>
        <end position="213"/>
    </location>
</feature>
<feature type="strand" evidence="8">
    <location>
        <begin position="216"/>
        <end position="222"/>
    </location>
</feature>
<feature type="strand" evidence="8">
    <location>
        <begin position="243"/>
        <end position="250"/>
    </location>
</feature>
<feature type="strand" evidence="8">
    <location>
        <begin position="255"/>
        <end position="260"/>
    </location>
</feature>
<feature type="helix" evidence="8">
    <location>
        <begin position="273"/>
        <end position="279"/>
    </location>
</feature>
<feature type="strand" evidence="8">
    <location>
        <begin position="284"/>
        <end position="289"/>
    </location>
</feature>
<feature type="strand" evidence="8">
    <location>
        <begin position="298"/>
        <end position="302"/>
    </location>
</feature>
<feature type="strand" evidence="8">
    <location>
        <begin position="331"/>
        <end position="335"/>
    </location>
</feature>
<feature type="strand" evidence="8">
    <location>
        <begin position="337"/>
        <end position="348"/>
    </location>
</feature>
<feature type="strand" evidence="8">
    <location>
        <begin position="350"/>
        <end position="355"/>
    </location>
</feature>
<feature type="strand" evidence="8">
    <location>
        <begin position="358"/>
        <end position="362"/>
    </location>
</feature>
<feature type="strand" evidence="8">
    <location>
        <begin position="370"/>
        <end position="372"/>
    </location>
</feature>
<feature type="strand" evidence="8">
    <location>
        <begin position="375"/>
        <end position="377"/>
    </location>
</feature>
<feature type="strand" evidence="8">
    <location>
        <begin position="380"/>
        <end position="387"/>
    </location>
</feature>
<feature type="strand" evidence="8">
    <location>
        <begin position="390"/>
        <end position="399"/>
    </location>
</feature>
<feature type="helix" evidence="8">
    <location>
        <begin position="400"/>
        <end position="402"/>
    </location>
</feature>
<feature type="strand" evidence="8">
    <location>
        <begin position="404"/>
        <end position="415"/>
    </location>
</feature>
<feature type="strand" evidence="8">
    <location>
        <begin position="418"/>
        <end position="430"/>
    </location>
</feature>
<feature type="helix" evidence="8">
    <location>
        <begin position="441"/>
        <end position="443"/>
    </location>
</feature>
<feature type="strand" evidence="8">
    <location>
        <begin position="447"/>
        <end position="449"/>
    </location>
</feature>
<feature type="strand" evidence="8">
    <location>
        <begin position="455"/>
        <end position="459"/>
    </location>
</feature>
<feature type="strand" evidence="8">
    <location>
        <begin position="466"/>
        <end position="470"/>
    </location>
</feature>
<feature type="strand" evidence="8">
    <location>
        <begin position="481"/>
        <end position="485"/>
    </location>
</feature>
<feature type="strand" evidence="8">
    <location>
        <begin position="494"/>
        <end position="503"/>
    </location>
</feature>
<feature type="strand" evidence="8">
    <location>
        <begin position="508"/>
        <end position="513"/>
    </location>
</feature>
<feature type="strand" evidence="8">
    <location>
        <begin position="519"/>
        <end position="521"/>
    </location>
</feature>
<feature type="helix" evidence="8">
    <location>
        <begin position="522"/>
        <end position="524"/>
    </location>
</feature>
<feature type="strand" evidence="8">
    <location>
        <begin position="529"/>
        <end position="537"/>
    </location>
</feature>
<feature type="strand" evidence="8">
    <location>
        <begin position="539"/>
        <end position="546"/>
    </location>
</feature>
<feature type="helix" evidence="8">
    <location>
        <begin position="562"/>
        <end position="564"/>
    </location>
</feature>
<feature type="strand" evidence="8">
    <location>
        <begin position="569"/>
        <end position="576"/>
    </location>
</feature>
<feature type="strand" evidence="8">
    <location>
        <begin position="578"/>
        <end position="582"/>
    </location>
</feature>
<feature type="helix" evidence="8">
    <location>
        <begin position="586"/>
        <end position="593"/>
    </location>
</feature>
<feature type="turn" evidence="8">
    <location>
        <begin position="594"/>
        <end position="596"/>
    </location>
</feature>
<feature type="helix" evidence="8">
    <location>
        <begin position="603"/>
        <end position="608"/>
    </location>
</feature>
<feature type="strand" evidence="8">
    <location>
        <begin position="609"/>
        <end position="616"/>
    </location>
</feature>
<feature type="helix" evidence="8">
    <location>
        <begin position="626"/>
        <end position="640"/>
    </location>
</feature>
<feature type="strand" evidence="8">
    <location>
        <begin position="644"/>
        <end position="650"/>
    </location>
</feature>
<feature type="helix" evidence="8">
    <location>
        <begin position="669"/>
        <end position="671"/>
    </location>
</feature>
<feature type="helix" evidence="8">
    <location>
        <begin position="673"/>
        <end position="685"/>
    </location>
</feature>
<feature type="turn" evidence="8">
    <location>
        <begin position="686"/>
        <end position="688"/>
    </location>
</feature>
<feature type="strand" evidence="8">
    <location>
        <begin position="689"/>
        <end position="700"/>
    </location>
</feature>
<feature type="strand" evidence="8">
    <location>
        <begin position="704"/>
        <end position="706"/>
    </location>
</feature>
<feature type="turn" evidence="8">
    <location>
        <begin position="709"/>
        <end position="711"/>
    </location>
</feature>
<feature type="strand" evidence="8">
    <location>
        <begin position="722"/>
        <end position="733"/>
    </location>
</feature>
<feature type="helix" evidence="8">
    <location>
        <begin position="735"/>
        <end position="740"/>
    </location>
</feature>
<feature type="helix" evidence="8">
    <location>
        <begin position="743"/>
        <end position="754"/>
    </location>
</feature>
<feature type="strand" evidence="8">
    <location>
        <begin position="760"/>
        <end position="765"/>
    </location>
</feature>
<feature type="helix" evidence="8">
    <location>
        <begin position="776"/>
        <end position="787"/>
    </location>
</feature>
<feature type="turn" evidence="8">
    <location>
        <begin position="788"/>
        <end position="790"/>
    </location>
</feature>
<feature type="strand" evidence="8">
    <location>
        <begin position="792"/>
        <end position="796"/>
    </location>
</feature>
<feature type="strand" evidence="8">
    <location>
        <begin position="798"/>
        <end position="800"/>
    </location>
</feature>
<feature type="turn" evidence="8">
    <location>
        <begin position="802"/>
        <end position="804"/>
    </location>
</feature>
<feature type="strand" evidence="8">
    <location>
        <begin position="806"/>
        <end position="808"/>
    </location>
</feature>
<feature type="helix" evidence="8">
    <location>
        <begin position="809"/>
        <end position="812"/>
    </location>
</feature>
<feature type="strand" evidence="8">
    <location>
        <begin position="814"/>
        <end position="817"/>
    </location>
</feature>
<feature type="strand" evidence="8">
    <location>
        <begin position="821"/>
        <end position="823"/>
    </location>
</feature>
<feature type="helix" evidence="8">
    <location>
        <begin position="827"/>
        <end position="833"/>
    </location>
</feature>
<feature type="turn" evidence="8">
    <location>
        <begin position="834"/>
        <end position="836"/>
    </location>
</feature>
<feature type="helix" evidence="8">
    <location>
        <begin position="845"/>
        <end position="847"/>
    </location>
</feature>
<feature type="helix" evidence="8">
    <location>
        <begin position="849"/>
        <end position="851"/>
    </location>
</feature>
<feature type="strand" evidence="8">
    <location>
        <begin position="864"/>
        <end position="866"/>
    </location>
</feature>
<feature type="helix" evidence="8">
    <location>
        <begin position="867"/>
        <end position="869"/>
    </location>
</feature>
<feature type="helix" evidence="8">
    <location>
        <begin position="874"/>
        <end position="890"/>
    </location>
</feature>
<feature type="strand" evidence="8">
    <location>
        <begin position="893"/>
        <end position="900"/>
    </location>
</feature>
<feature type="strand" evidence="8">
    <location>
        <begin position="904"/>
        <end position="908"/>
    </location>
</feature>
<feature type="strand" evidence="8">
    <location>
        <begin position="911"/>
        <end position="915"/>
    </location>
</feature>
<feature type="strand" evidence="8">
    <location>
        <begin position="918"/>
        <end position="924"/>
    </location>
</feature>
<feature type="strand" evidence="8">
    <location>
        <begin position="930"/>
        <end position="936"/>
    </location>
</feature>
<feature type="helix" evidence="8">
    <location>
        <begin position="943"/>
        <end position="946"/>
    </location>
</feature>
<feature type="strand" evidence="8">
    <location>
        <begin position="948"/>
        <end position="952"/>
    </location>
</feature>
<feature type="strand" evidence="8">
    <location>
        <begin position="955"/>
        <end position="959"/>
    </location>
</feature>
<feature type="strand" evidence="8">
    <location>
        <begin position="962"/>
        <end position="967"/>
    </location>
</feature>
<feature type="helix" evidence="8">
    <location>
        <begin position="978"/>
        <end position="980"/>
    </location>
</feature>
<feature type="strand" evidence="8">
    <location>
        <begin position="982"/>
        <end position="989"/>
    </location>
</feature>
<feature type="strand" evidence="8">
    <location>
        <begin position="991"/>
        <end position="996"/>
    </location>
</feature>
<feature type="helix" evidence="8">
    <location>
        <begin position="999"/>
        <end position="1002"/>
    </location>
</feature>
<feature type="strand" evidence="8">
    <location>
        <begin position="1007"/>
        <end position="1012"/>
    </location>
</feature>
<feature type="strand" evidence="8">
    <location>
        <begin position="1015"/>
        <end position="1021"/>
    </location>
</feature>
<feature type="strand" evidence="8">
    <location>
        <begin position="1026"/>
        <end position="1032"/>
    </location>
</feature>
<feature type="strand" evidence="8">
    <location>
        <begin position="1039"/>
        <end position="1044"/>
    </location>
</feature>
<feature type="turn" evidence="8">
    <location>
        <begin position="1053"/>
        <end position="1058"/>
    </location>
</feature>
<feature type="strand" evidence="8">
    <location>
        <begin position="1072"/>
        <end position="1076"/>
    </location>
</feature>
<feature type="helix" evidence="8">
    <location>
        <begin position="1078"/>
        <end position="1080"/>
    </location>
</feature>
<feature type="strand" evidence="8">
    <location>
        <begin position="1081"/>
        <end position="1085"/>
    </location>
</feature>
<feature type="strand" evidence="8">
    <location>
        <begin position="1091"/>
        <end position="1095"/>
    </location>
</feature>
<feature type="strand" evidence="8">
    <location>
        <begin position="1097"/>
        <end position="1100"/>
    </location>
</feature>
<feature type="strand" evidence="8">
    <location>
        <begin position="1102"/>
        <end position="1107"/>
    </location>
</feature>
<feature type="strand" evidence="8">
    <location>
        <begin position="1116"/>
        <end position="1125"/>
    </location>
</feature>
<feature type="strand" evidence="8">
    <location>
        <begin position="1127"/>
        <end position="1129"/>
    </location>
</feature>
<feature type="strand" evidence="8">
    <location>
        <begin position="1131"/>
        <end position="1136"/>
    </location>
</feature>
<feature type="strand" evidence="8">
    <location>
        <begin position="1141"/>
        <end position="1148"/>
    </location>
</feature>
<feature type="helix" evidence="8">
    <location>
        <begin position="1164"/>
        <end position="1166"/>
    </location>
</feature>
<feature type="strand" evidence="8">
    <location>
        <begin position="1176"/>
        <end position="1183"/>
    </location>
</feature>
<feature type="strand" evidence="8">
    <location>
        <begin position="1192"/>
        <end position="1197"/>
    </location>
</feature>
<feature type="strand" evidence="8">
    <location>
        <begin position="1199"/>
        <end position="1202"/>
    </location>
</feature>
<feature type="strand" evidence="8">
    <location>
        <begin position="1204"/>
        <end position="1213"/>
    </location>
</feature>
<feature type="strand" evidence="8">
    <location>
        <begin position="1219"/>
        <end position="1221"/>
    </location>
</feature>
<feature type="strand" evidence="8">
    <location>
        <begin position="1223"/>
        <end position="1225"/>
    </location>
</feature>
<feature type="strand" evidence="8">
    <location>
        <begin position="1230"/>
        <end position="1232"/>
    </location>
</feature>
<feature type="turn" evidence="8">
    <location>
        <begin position="1240"/>
        <end position="1243"/>
    </location>
</feature>
<feature type="strand" evidence="8">
    <location>
        <begin position="1244"/>
        <end position="1246"/>
    </location>
</feature>
<feature type="strand" evidence="8">
    <location>
        <begin position="1251"/>
        <end position="1254"/>
    </location>
</feature>
<feature type="strand" evidence="8">
    <location>
        <begin position="1256"/>
        <end position="1261"/>
    </location>
</feature>
<feature type="turn" evidence="8">
    <location>
        <begin position="1264"/>
        <end position="1267"/>
    </location>
</feature>
<feature type="helix" evidence="8">
    <location>
        <begin position="1271"/>
        <end position="1273"/>
    </location>
</feature>
<feature type="strand" evidence="8">
    <location>
        <begin position="1284"/>
        <end position="1290"/>
    </location>
</feature>
<feature type="strand" evidence="8">
    <location>
        <begin position="1296"/>
        <end position="1301"/>
    </location>
</feature>
<feature type="turn" evidence="8">
    <location>
        <begin position="1303"/>
        <end position="1305"/>
    </location>
</feature>
<feature type="strand" evidence="8">
    <location>
        <begin position="1313"/>
        <end position="1324"/>
    </location>
</feature>
<feature type="strand" evidence="8">
    <location>
        <begin position="1327"/>
        <end position="1336"/>
    </location>
</feature>
<feature type="strand" evidence="8">
    <location>
        <begin position="1339"/>
        <end position="1341"/>
    </location>
</feature>
<feature type="helix" evidence="8">
    <location>
        <begin position="1346"/>
        <end position="1348"/>
    </location>
</feature>
<feature type="strand" evidence="8">
    <location>
        <begin position="1349"/>
        <end position="1353"/>
    </location>
</feature>
<feature type="strand" evidence="8">
    <location>
        <begin position="1365"/>
        <end position="1372"/>
    </location>
</feature>
<feature type="strand" evidence="8">
    <location>
        <begin position="1379"/>
        <end position="1385"/>
    </location>
</feature>
<feature type="helix" evidence="8">
    <location>
        <begin position="1397"/>
        <end position="1403"/>
    </location>
</feature>
<feature type="turn" evidence="8">
    <location>
        <begin position="1404"/>
        <end position="1406"/>
    </location>
</feature>
<feature type="strand" evidence="8">
    <location>
        <begin position="1407"/>
        <end position="1418"/>
    </location>
</feature>
<feature type="helix" evidence="8">
    <location>
        <begin position="1422"/>
        <end position="1437"/>
    </location>
</feature>
<feature type="helix" evidence="8">
    <location>
        <begin position="1444"/>
        <end position="1450"/>
    </location>
</feature>
<feature type="helix" evidence="8">
    <location>
        <begin position="1452"/>
        <end position="1458"/>
    </location>
</feature>
<feature type="helix" evidence="8">
    <location>
        <begin position="1466"/>
        <end position="1475"/>
    </location>
</feature>
<feature type="helix" evidence="8">
    <location>
        <begin position="1477"/>
        <end position="1480"/>
    </location>
</feature>
<name>GH101_STRR6</name>
<protein>
    <recommendedName>
        <fullName>Endo-alpha-N-acetylgalactosaminidase</fullName>
        <ecNumber evidence="6">3.2.1.97</ecNumber>
    </recommendedName>
    <alternativeName>
        <fullName>SpGH101</fullName>
    </alternativeName>
</protein>
<organism>
    <name type="scientific">Streptococcus pneumoniae (strain ATCC BAA-255 / R6)</name>
    <dbReference type="NCBI Taxonomy" id="171101"/>
    <lineage>
        <taxon>Bacteria</taxon>
        <taxon>Bacillati</taxon>
        <taxon>Bacillota</taxon>
        <taxon>Bacilli</taxon>
        <taxon>Lactobacillales</taxon>
        <taxon>Streptococcaceae</taxon>
        <taxon>Streptococcus</taxon>
    </lineage>
</organism>
<dbReference type="EC" id="3.2.1.97" evidence="6"/>
<dbReference type="EMBL" id="AE007317">
    <property type="protein sequence ID" value="AAK99132.1"/>
    <property type="molecule type" value="Genomic_DNA"/>
</dbReference>
<dbReference type="PIR" id="H97912">
    <property type="entry name" value="H97912"/>
</dbReference>
<dbReference type="RefSeq" id="NP_357922.1">
    <property type="nucleotide sequence ID" value="NC_003098.1"/>
</dbReference>
<dbReference type="RefSeq" id="WP_001032523.1">
    <property type="nucleotide sequence ID" value="NC_003098.1"/>
</dbReference>
<dbReference type="PDB" id="3ECQ">
    <property type="method" value="X-ray"/>
    <property type="resolution" value="2.90 A"/>
    <property type="chains" value="A/B=40-1567"/>
</dbReference>
<dbReference type="PDBsum" id="3ECQ"/>
<dbReference type="SMR" id="Q8DR60"/>
<dbReference type="STRING" id="171101.spr0328"/>
<dbReference type="CAZy" id="CBM32">
    <property type="family name" value="Carbohydrate-Binding Module Family 32"/>
</dbReference>
<dbReference type="CAZy" id="GH101">
    <property type="family name" value="Glycoside Hydrolase Family 101"/>
</dbReference>
<dbReference type="KEGG" id="spr:spr0328"/>
<dbReference type="PATRIC" id="fig|171101.6.peg.367"/>
<dbReference type="eggNOG" id="COG0366">
    <property type="taxonomic scope" value="Bacteria"/>
</dbReference>
<dbReference type="HOGENOM" id="CLU_001105_0_0_9"/>
<dbReference type="BRENDA" id="3.2.1.97">
    <property type="organism ID" value="11933"/>
</dbReference>
<dbReference type="EvolutionaryTrace" id="Q8DR60"/>
<dbReference type="Proteomes" id="UP000000586">
    <property type="component" value="Chromosome"/>
</dbReference>
<dbReference type="GO" id="GO:0005576">
    <property type="term" value="C:extracellular region"/>
    <property type="evidence" value="ECO:0007669"/>
    <property type="project" value="UniProtKB-KW"/>
</dbReference>
<dbReference type="GO" id="GO:0030246">
    <property type="term" value="F:carbohydrate binding"/>
    <property type="evidence" value="ECO:0007669"/>
    <property type="project" value="InterPro"/>
</dbReference>
<dbReference type="GO" id="GO:0033926">
    <property type="term" value="F:endo-alpha-N-acetylgalactosaminidase activity"/>
    <property type="evidence" value="ECO:0007669"/>
    <property type="project" value="UniProtKB-EC"/>
</dbReference>
<dbReference type="GO" id="GO:0046872">
    <property type="term" value="F:metal ion binding"/>
    <property type="evidence" value="ECO:0007669"/>
    <property type="project" value="UniProtKB-KW"/>
</dbReference>
<dbReference type="CDD" id="cd14244">
    <property type="entry name" value="GH_101_like"/>
    <property type="match status" value="1"/>
</dbReference>
<dbReference type="Gene3D" id="2.60.120.870">
    <property type="match status" value="1"/>
</dbReference>
<dbReference type="Gene3D" id="2.70.98.10">
    <property type="match status" value="1"/>
</dbReference>
<dbReference type="Gene3D" id="6.10.140.660">
    <property type="match status" value="1"/>
</dbReference>
<dbReference type="Gene3D" id="2.60.120.260">
    <property type="entry name" value="Galactose-binding domain-like"/>
    <property type="match status" value="3"/>
</dbReference>
<dbReference type="Gene3D" id="3.20.20.80">
    <property type="entry name" value="Glycosidases"/>
    <property type="match status" value="1"/>
</dbReference>
<dbReference type="Gene3D" id="2.60.40.1180">
    <property type="entry name" value="Golgi alpha-mannosidase II"/>
    <property type="match status" value="1"/>
</dbReference>
<dbReference type="InterPro" id="IPR025706">
    <property type="entry name" value="Endoa_GalNAc"/>
</dbReference>
<dbReference type="InterPro" id="IPR000421">
    <property type="entry name" value="FA58C"/>
</dbReference>
<dbReference type="InterPro" id="IPR040633">
    <property type="entry name" value="Gal_mutarotas_3"/>
</dbReference>
<dbReference type="InterPro" id="IPR008979">
    <property type="entry name" value="Galactose-bd-like_sf"/>
</dbReference>
<dbReference type="InterPro" id="IPR014718">
    <property type="entry name" value="GH-type_carb-bd"/>
</dbReference>
<dbReference type="InterPro" id="IPR049314">
    <property type="entry name" value="GH101_dom-5"/>
</dbReference>
<dbReference type="InterPro" id="IPR040502">
    <property type="entry name" value="GH101_dom-6"/>
</dbReference>
<dbReference type="InterPro" id="IPR040575">
    <property type="entry name" value="GH101_N"/>
</dbReference>
<dbReference type="InterPro" id="IPR035364">
    <property type="entry name" value="Glyco_hyd_101_beta"/>
</dbReference>
<dbReference type="InterPro" id="IPR013780">
    <property type="entry name" value="Glyco_hydro_b"/>
</dbReference>
<dbReference type="InterPro" id="IPR019931">
    <property type="entry name" value="LPXTG_anchor"/>
</dbReference>
<dbReference type="InterPro" id="IPR005877">
    <property type="entry name" value="YSIRK_signal_dom"/>
</dbReference>
<dbReference type="NCBIfam" id="NF040533">
    <property type="entry name" value="endo_SpGH101"/>
    <property type="match status" value="1"/>
</dbReference>
<dbReference type="NCBIfam" id="TIGR01168">
    <property type="entry name" value="YSIRK_signal"/>
    <property type="match status" value="1"/>
</dbReference>
<dbReference type="Pfam" id="PF00754">
    <property type="entry name" value="F5_F8_type_C"/>
    <property type="match status" value="1"/>
</dbReference>
<dbReference type="Pfam" id="PF18080">
    <property type="entry name" value="Gal_mutarotas_3"/>
    <property type="match status" value="1"/>
</dbReference>
<dbReference type="Pfam" id="PF17974">
    <property type="entry name" value="GalBD_like"/>
    <property type="match status" value="1"/>
</dbReference>
<dbReference type="Pfam" id="PF21466">
    <property type="entry name" value="GH101_dom-5"/>
    <property type="match status" value="1"/>
</dbReference>
<dbReference type="Pfam" id="PF17995">
    <property type="entry name" value="GH101_N"/>
    <property type="match status" value="1"/>
</dbReference>
<dbReference type="Pfam" id="PF17451">
    <property type="entry name" value="Glyco_hyd_101C"/>
    <property type="match status" value="1"/>
</dbReference>
<dbReference type="Pfam" id="PF12905">
    <property type="entry name" value="Glyco_hydro_101"/>
    <property type="match status" value="1"/>
</dbReference>
<dbReference type="Pfam" id="PF04650">
    <property type="entry name" value="YSIRK_signal"/>
    <property type="match status" value="1"/>
</dbReference>
<dbReference type="SUPFAM" id="SSF49785">
    <property type="entry name" value="Galactose-binding domain-like"/>
    <property type="match status" value="1"/>
</dbReference>
<dbReference type="PROSITE" id="PS50847">
    <property type="entry name" value="GRAM_POS_ANCHORING"/>
    <property type="match status" value="1"/>
</dbReference>
<evidence type="ECO:0000255" key="1"/>
<evidence type="ECO:0000255" key="2">
    <source>
        <dbReference type="PROSITE-ProRule" id="PRU00477"/>
    </source>
</evidence>
<evidence type="ECO:0000256" key="3">
    <source>
        <dbReference type="SAM" id="MobiDB-lite"/>
    </source>
</evidence>
<evidence type="ECO:0000269" key="4">
    <source>
    </source>
</evidence>
<evidence type="ECO:0000269" key="5">
    <source>
    </source>
</evidence>
<evidence type="ECO:0000269" key="6">
    <source>
    </source>
</evidence>
<evidence type="ECO:0000305" key="7"/>
<evidence type="ECO:0007829" key="8">
    <source>
        <dbReference type="PDB" id="3ECQ"/>
    </source>
</evidence>
<gene>
    <name type="ordered locus">spr0328</name>
</gene>
<proteinExistence type="evidence at protein level"/>
<comment type="function">
    <text evidence="4 5 6">Involved in the breakdown of mucin-type O-linked glycans. Specifically removes the T-antigen disaccharide (Gal-beta-1,3-GalNAc-alpha) from extracellular host glycoproteins. Representative of a broadly important class of virulence factors.</text>
</comment>
<comment type="catalytic activity">
    <reaction evidence="6">
        <text>a 3-O-[beta-D-galactosyl-(1-&gt;3)-N-acetyl-alpha-D-galactosaminyl]-L-threonyl-[protein] + H2O = beta-D-galactosyl-(1-&gt;3)-N-acetyl-D-galactosamine + L-threonyl-[protein]</text>
        <dbReference type="Rhea" id="RHEA:54540"/>
        <dbReference type="Rhea" id="RHEA-COMP:11060"/>
        <dbReference type="Rhea" id="RHEA-COMP:13923"/>
        <dbReference type="ChEBI" id="CHEBI:15377"/>
        <dbReference type="ChEBI" id="CHEBI:30013"/>
        <dbReference type="ChEBI" id="CHEBI:137950"/>
        <dbReference type="ChEBI" id="CHEBI:546807"/>
        <dbReference type="EC" id="3.2.1.97"/>
    </reaction>
</comment>
<comment type="catalytic activity">
    <reaction evidence="6">
        <text>a 3-O-[beta-D-galactosyl-(1-&gt;3)-N-acetyl-alpha-D-galactosaminyl]-L-seryl-[protein] + H2O = beta-D-galactosyl-(1-&gt;3)-N-acetyl-D-galactosamine + L-seryl-[protein]</text>
        <dbReference type="Rhea" id="RHEA:30983"/>
        <dbReference type="Rhea" id="RHEA-COMP:9863"/>
        <dbReference type="Rhea" id="RHEA-COMP:13922"/>
        <dbReference type="ChEBI" id="CHEBI:15377"/>
        <dbReference type="ChEBI" id="CHEBI:29999"/>
        <dbReference type="ChEBI" id="CHEBI:137949"/>
        <dbReference type="ChEBI" id="CHEBI:546807"/>
        <dbReference type="EC" id="3.2.1.97"/>
    </reaction>
</comment>
<comment type="biophysicochemical properties">
    <kinetics>
        <KM evidence="5">34 uM for Gal-beta-1,3-GalNAc-alpha-2,4-dinitrophenyl</KM>
    </kinetics>
    <phDependence>
        <text evidence="6">Optimum pH is 7.6.</text>
    </phDependence>
</comment>
<comment type="subcellular location">
    <subcellularLocation>
        <location evidence="2">Secreted</location>
        <location evidence="2">Cell wall</location>
        <topology evidence="2">Peptidoglycan-anchor</topology>
    </subcellularLocation>
</comment>
<comment type="domain">
    <text evidence="4">Is a multimodular protein that comprises seven distinct domains. The catalytic glycoside hydrolase domain resides in domain 3 (residues 602-893). Possesses four potential carbohydrate-binding modules (CBMs).</text>
</comment>
<comment type="miscellaneous">
    <text>The hydrolysis reaction catalyzed by SpGH101 proceeds with retention of the anomeric configuration.</text>
</comment>
<comment type="similarity">
    <text evidence="7">Belongs to the glycosyl hydrolase 101 family. A subfamily.</text>
</comment>
<reference key="1">
    <citation type="journal article" date="2001" name="J. Bacteriol.">
        <title>Genome of the bacterium Streptococcus pneumoniae strain R6.</title>
        <authorList>
            <person name="Hoskins J."/>
            <person name="Alborn W.E. Jr."/>
            <person name="Arnold J."/>
            <person name="Blaszczak L.C."/>
            <person name="Burgett S."/>
            <person name="DeHoff B.S."/>
            <person name="Estrem S.T."/>
            <person name="Fritz L."/>
            <person name="Fu D.-J."/>
            <person name="Fuller W."/>
            <person name="Geringer C."/>
            <person name="Gilmour R."/>
            <person name="Glass J.S."/>
            <person name="Khoja H."/>
            <person name="Kraft A.R."/>
            <person name="Lagace R.E."/>
            <person name="LeBlanc D.J."/>
            <person name="Lee L.N."/>
            <person name="Lefkowitz E.J."/>
            <person name="Lu J."/>
            <person name="Matsushima P."/>
            <person name="McAhren S.M."/>
            <person name="McHenney M."/>
            <person name="McLeaster K."/>
            <person name="Mundy C.W."/>
            <person name="Nicas T.I."/>
            <person name="Norris F.H."/>
            <person name="O'Gara M."/>
            <person name="Peery R.B."/>
            <person name="Robertson G.T."/>
            <person name="Rockey P."/>
            <person name="Sun P.-M."/>
            <person name="Winkler M.E."/>
            <person name="Yang Y."/>
            <person name="Young-Bellido M."/>
            <person name="Zhao G."/>
            <person name="Zook C.A."/>
            <person name="Baltz R.H."/>
            <person name="Jaskunas S.R."/>
            <person name="Rosteck P.R. Jr."/>
            <person name="Skatrud P.L."/>
            <person name="Glass J.I."/>
        </authorList>
    </citation>
    <scope>NUCLEOTIDE SEQUENCE [LARGE SCALE GENOMIC DNA]</scope>
    <source>
        <strain>ATCC BAA-255 / R6</strain>
    </source>
</reference>
<reference key="2">
    <citation type="journal article" date="1977" name="J. Biol. Chem.">
        <title>Purification and properties of an endo-alpha-N-acetyl-D-galactosaminidase from Diplococcus pneumoniae.</title>
        <authorList>
            <person name="Umemoto J."/>
            <person name="Bhavanandan V.P."/>
            <person name="Davidson E.A."/>
        </authorList>
    </citation>
    <scope>FUNCTION</scope>
    <scope>CATALYTIC ACTIVITY</scope>
    <scope>SUBSTRATE SPECIFICITY</scope>
    <scope>PH DEPENDENCE</scope>
</reference>
<reference key="3">
    <citation type="journal article" date="2009" name="Biochemistry">
        <title>Mechanistic investigation of the endo-alpha-N-acetylgalactosaminidase from Streptococcus pneumoniae R6.</title>
        <authorList>
            <person name="Willis L.M."/>
            <person name="Zhang R."/>
            <person name="Reid A."/>
            <person name="Withers S.G."/>
            <person name="Wakarchuk W.W."/>
        </authorList>
    </citation>
    <scope>FUNCTION</scope>
    <scope>O-GLYCANASE ACTIVITY</scope>
    <scope>KINETIC PARAMETERS</scope>
    <scope>REACTION MECHANISM</scope>
    <scope>ACTIVE SITES</scope>
    <scope>GLYCAN-BINDING STUDIES</scope>
    <scope>MUTAGENESIS OF ASP-658; ASP-764 AND GLU-796</scope>
    <source>
        <strain>ATCC BAA-255 / R6</strain>
    </source>
</reference>
<reference key="4">
    <citation type="journal article" date="2008" name="J. Biol. Chem.">
        <title>The structural basis for T-antigen hydrolysis by Streptococcus pneumoniae: a target for structure-based vaccine design.</title>
        <authorList>
            <person name="Caines M.E."/>
            <person name="Zhu H."/>
            <person name="Vuckovic M."/>
            <person name="Willis L.M."/>
            <person name="Withers S.G."/>
            <person name="Wakarchuk W.W."/>
            <person name="Strynadka N.C."/>
        </authorList>
    </citation>
    <scope>X-RAY CRYSTALLOGRAPHY (2.90 ANGSTROMS) OF 40-1567 IN COMPLEX WITH CALCIUM</scope>
    <scope>FUNCTION</scope>
    <scope>DOMAIN</scope>
    <source>
        <strain>ATCC BAA-255 / R6</strain>
    </source>
</reference>